<proteinExistence type="inferred from homology"/>
<feature type="chain" id="PRO_0000328094" description="Signal recognition particle 19 kDa protein homolog">
    <location>
        <begin position="1"/>
        <end position="178"/>
    </location>
</feature>
<feature type="region of interest" description="Disordered" evidence="3">
    <location>
        <begin position="135"/>
        <end position="178"/>
    </location>
</feature>
<feature type="compositionally biased region" description="Low complexity" evidence="3">
    <location>
        <begin position="148"/>
        <end position="167"/>
    </location>
</feature>
<feature type="compositionally biased region" description="Basic residues" evidence="3">
    <location>
        <begin position="168"/>
        <end position="178"/>
    </location>
</feature>
<accession>Q554G7</accession>
<accession>Q8T1F7</accession>
<sequence length="178" mass="19622">MTSAQPKAVDVSTIPGFKKWYIVYPNHINSELTKEKGRKVSKEHGVKNPTLPEIAEATAQLGLPCIIETSKGYPKEFFLRGRLRINFFCDGTTMPRNPHIPNKTVLLVKIAERIKLINPNRPEPFNPISMLAPIQAVSQKEKKPAPQPTTTTTTTTTPSSSSSSSSKGGKKKKNVNVI</sequence>
<protein>
    <recommendedName>
        <fullName>Signal recognition particle 19 kDa protein homolog</fullName>
    </recommendedName>
</protein>
<keyword id="KW-0963">Cytoplasm</keyword>
<keyword id="KW-0539">Nucleus</keyword>
<keyword id="KW-1185">Reference proteome</keyword>
<keyword id="KW-0687">Ribonucleoprotein</keyword>
<keyword id="KW-0694">RNA-binding</keyword>
<keyword id="KW-0733">Signal recognition particle</keyword>
<gene>
    <name type="primary">srp19</name>
    <name type="ORF">DDB_G0275211</name>
</gene>
<comment type="function">
    <text evidence="1">Component of the signal recognition particle (SRP) complex, a ribonucleoprotein complex that mediates the cotranslational targeting of secretory and membrane proteins to the endoplasmic reticulum (ER) (By similarity). Binds directly to 7SL RNA (By similarity). Mediates binding of srp54 to the SRP complex (By similarity).</text>
</comment>
<comment type="subunit">
    <text evidence="2">Component of a signal recognition particle complex that consists of a 7SL RNA molecule and six protein subunits: srp72, srp68, srp54, srp19, srp14 and srp9.</text>
</comment>
<comment type="subcellular location">
    <subcellularLocation>
        <location evidence="2">Cytoplasm</location>
    </subcellularLocation>
    <subcellularLocation>
        <location evidence="2">Nucleus</location>
        <location evidence="2">Nucleolus</location>
    </subcellularLocation>
</comment>
<comment type="similarity">
    <text evidence="4">Belongs to the SRP19 family.</text>
</comment>
<dbReference type="EMBL" id="AAFI02000013">
    <property type="protein sequence ID" value="EAL69886.1"/>
    <property type="molecule type" value="Genomic_DNA"/>
</dbReference>
<dbReference type="RefSeq" id="XP_643744.1">
    <property type="nucleotide sequence ID" value="XM_638652.1"/>
</dbReference>
<dbReference type="SMR" id="Q554G7"/>
<dbReference type="FunCoup" id="Q554G7">
    <property type="interactions" value="66"/>
</dbReference>
<dbReference type="STRING" id="44689.Q554G7"/>
<dbReference type="PaxDb" id="44689-DDB0232381"/>
<dbReference type="EnsemblProtists" id="EAL69886">
    <property type="protein sequence ID" value="EAL69886"/>
    <property type="gene ID" value="DDB_G0275211"/>
</dbReference>
<dbReference type="GeneID" id="8619788"/>
<dbReference type="KEGG" id="ddi:DDB_G0275211"/>
<dbReference type="dictyBase" id="DDB_G0275211">
    <property type="gene designation" value="srp19"/>
</dbReference>
<dbReference type="VEuPathDB" id="AmoebaDB:DDB_G0275211"/>
<dbReference type="eggNOG" id="KOG3198">
    <property type="taxonomic scope" value="Eukaryota"/>
</dbReference>
<dbReference type="HOGENOM" id="CLU_1513271_0_0_1"/>
<dbReference type="InParanoid" id="Q554G7"/>
<dbReference type="OMA" id="ICEYINT"/>
<dbReference type="PhylomeDB" id="Q554G7"/>
<dbReference type="Reactome" id="R-DDI-1799339">
    <property type="pathway name" value="SRP-dependent cotranslational protein targeting to membrane"/>
</dbReference>
<dbReference type="PRO" id="PR:Q554G7"/>
<dbReference type="Proteomes" id="UP000002195">
    <property type="component" value="Chromosome 2"/>
</dbReference>
<dbReference type="GO" id="GO:0005730">
    <property type="term" value="C:nucleolus"/>
    <property type="evidence" value="ECO:0007669"/>
    <property type="project" value="UniProtKB-SubCell"/>
</dbReference>
<dbReference type="GO" id="GO:0005786">
    <property type="term" value="C:signal recognition particle, endoplasmic reticulum targeting"/>
    <property type="evidence" value="ECO:0000318"/>
    <property type="project" value="GO_Central"/>
</dbReference>
<dbReference type="GO" id="GO:0008312">
    <property type="term" value="F:7S RNA binding"/>
    <property type="evidence" value="ECO:0000318"/>
    <property type="project" value="GO_Central"/>
</dbReference>
<dbReference type="GO" id="GO:0006614">
    <property type="term" value="P:SRP-dependent cotranslational protein targeting to membrane"/>
    <property type="evidence" value="ECO:0000250"/>
    <property type="project" value="dictyBase"/>
</dbReference>
<dbReference type="GO" id="GO:0006617">
    <property type="term" value="P:SRP-dependent cotranslational protein targeting to membrane, signal sequence recognition"/>
    <property type="evidence" value="ECO:0000318"/>
    <property type="project" value="GO_Central"/>
</dbReference>
<dbReference type="Gene3D" id="3.30.56.30">
    <property type="entry name" value="Signal recognition particle, SRP19-like subunit"/>
    <property type="match status" value="1"/>
</dbReference>
<dbReference type="InterPro" id="IPR002778">
    <property type="entry name" value="Signal_recog_particle_SRP19"/>
</dbReference>
<dbReference type="InterPro" id="IPR036521">
    <property type="entry name" value="SRP19-like_sf"/>
</dbReference>
<dbReference type="PANTHER" id="PTHR17453">
    <property type="entry name" value="SIGNAL RECOGNITION PARTICLE 19 KD PROTEIN"/>
    <property type="match status" value="1"/>
</dbReference>
<dbReference type="PANTHER" id="PTHR17453:SF0">
    <property type="entry name" value="SIGNAL RECOGNITION PARTICLE 19 KDA PROTEIN"/>
    <property type="match status" value="1"/>
</dbReference>
<dbReference type="Pfam" id="PF01922">
    <property type="entry name" value="SRP19"/>
    <property type="match status" value="1"/>
</dbReference>
<dbReference type="SUPFAM" id="SSF69695">
    <property type="entry name" value="SRP19"/>
    <property type="match status" value="1"/>
</dbReference>
<organism>
    <name type="scientific">Dictyostelium discoideum</name>
    <name type="common">Social amoeba</name>
    <dbReference type="NCBI Taxonomy" id="44689"/>
    <lineage>
        <taxon>Eukaryota</taxon>
        <taxon>Amoebozoa</taxon>
        <taxon>Evosea</taxon>
        <taxon>Eumycetozoa</taxon>
        <taxon>Dictyostelia</taxon>
        <taxon>Dictyosteliales</taxon>
        <taxon>Dictyosteliaceae</taxon>
        <taxon>Dictyostelium</taxon>
    </lineage>
</organism>
<reference key="1">
    <citation type="journal article" date="2002" name="Nature">
        <title>Sequence and analysis of chromosome 2 of Dictyostelium discoideum.</title>
        <authorList>
            <person name="Gloeckner G."/>
            <person name="Eichinger L."/>
            <person name="Szafranski K."/>
            <person name="Pachebat J.A."/>
            <person name="Bankier A.T."/>
            <person name="Dear P.H."/>
            <person name="Lehmann R."/>
            <person name="Baumgart C."/>
            <person name="Parra G."/>
            <person name="Abril J.F."/>
            <person name="Guigo R."/>
            <person name="Kumpf K."/>
            <person name="Tunggal B."/>
            <person name="Cox E.C."/>
            <person name="Quail M.A."/>
            <person name="Platzer M."/>
            <person name="Rosenthal A."/>
            <person name="Noegel A.A."/>
        </authorList>
    </citation>
    <scope>NUCLEOTIDE SEQUENCE [LARGE SCALE GENOMIC DNA]</scope>
    <source>
        <strain>AX4</strain>
    </source>
</reference>
<reference key="2">
    <citation type="journal article" date="2005" name="Nature">
        <title>The genome of the social amoeba Dictyostelium discoideum.</title>
        <authorList>
            <person name="Eichinger L."/>
            <person name="Pachebat J.A."/>
            <person name="Gloeckner G."/>
            <person name="Rajandream M.A."/>
            <person name="Sucgang R."/>
            <person name="Berriman M."/>
            <person name="Song J."/>
            <person name="Olsen R."/>
            <person name="Szafranski K."/>
            <person name="Xu Q."/>
            <person name="Tunggal B."/>
            <person name="Kummerfeld S."/>
            <person name="Madera M."/>
            <person name="Konfortov B.A."/>
            <person name="Rivero F."/>
            <person name="Bankier A.T."/>
            <person name="Lehmann R."/>
            <person name="Hamlin N."/>
            <person name="Davies R."/>
            <person name="Gaudet P."/>
            <person name="Fey P."/>
            <person name="Pilcher K."/>
            <person name="Chen G."/>
            <person name="Saunders D."/>
            <person name="Sodergren E.J."/>
            <person name="Davis P."/>
            <person name="Kerhornou A."/>
            <person name="Nie X."/>
            <person name="Hall N."/>
            <person name="Anjard C."/>
            <person name="Hemphill L."/>
            <person name="Bason N."/>
            <person name="Farbrother P."/>
            <person name="Desany B."/>
            <person name="Just E."/>
            <person name="Morio T."/>
            <person name="Rost R."/>
            <person name="Churcher C.M."/>
            <person name="Cooper J."/>
            <person name="Haydock S."/>
            <person name="van Driessche N."/>
            <person name="Cronin A."/>
            <person name="Goodhead I."/>
            <person name="Muzny D.M."/>
            <person name="Mourier T."/>
            <person name="Pain A."/>
            <person name="Lu M."/>
            <person name="Harper D."/>
            <person name="Lindsay R."/>
            <person name="Hauser H."/>
            <person name="James K.D."/>
            <person name="Quiles M."/>
            <person name="Madan Babu M."/>
            <person name="Saito T."/>
            <person name="Buchrieser C."/>
            <person name="Wardroper A."/>
            <person name="Felder M."/>
            <person name="Thangavelu M."/>
            <person name="Johnson D."/>
            <person name="Knights A."/>
            <person name="Loulseged H."/>
            <person name="Mungall K.L."/>
            <person name="Oliver K."/>
            <person name="Price C."/>
            <person name="Quail M.A."/>
            <person name="Urushihara H."/>
            <person name="Hernandez J."/>
            <person name="Rabbinowitsch E."/>
            <person name="Steffen D."/>
            <person name="Sanders M."/>
            <person name="Ma J."/>
            <person name="Kohara Y."/>
            <person name="Sharp S."/>
            <person name="Simmonds M.N."/>
            <person name="Spiegler S."/>
            <person name="Tivey A."/>
            <person name="Sugano S."/>
            <person name="White B."/>
            <person name="Walker D."/>
            <person name="Woodward J.R."/>
            <person name="Winckler T."/>
            <person name="Tanaka Y."/>
            <person name="Shaulsky G."/>
            <person name="Schleicher M."/>
            <person name="Weinstock G.M."/>
            <person name="Rosenthal A."/>
            <person name="Cox E.C."/>
            <person name="Chisholm R.L."/>
            <person name="Gibbs R.A."/>
            <person name="Loomis W.F."/>
            <person name="Platzer M."/>
            <person name="Kay R.R."/>
            <person name="Williams J.G."/>
            <person name="Dear P.H."/>
            <person name="Noegel A.A."/>
            <person name="Barrell B.G."/>
            <person name="Kuspa A."/>
        </authorList>
    </citation>
    <scope>NUCLEOTIDE SEQUENCE [LARGE SCALE GENOMIC DNA]</scope>
    <source>
        <strain>AX4</strain>
    </source>
</reference>
<evidence type="ECO:0000250" key="1">
    <source>
        <dbReference type="UniProtKB" id="J9PAS6"/>
    </source>
</evidence>
<evidence type="ECO:0000250" key="2">
    <source>
        <dbReference type="UniProtKB" id="P09132"/>
    </source>
</evidence>
<evidence type="ECO:0000256" key="3">
    <source>
        <dbReference type="SAM" id="MobiDB-lite"/>
    </source>
</evidence>
<evidence type="ECO:0000305" key="4"/>
<name>SRP19_DICDI</name>